<reference key="1">
    <citation type="journal article" date="2014" name="Stand. Genomic Sci.">
        <title>Complete genome sequence of Burkholderia phymatum STM815(T), a broad host range and efficient nitrogen-fixing symbiont of Mimosa species.</title>
        <authorList>
            <person name="Moulin L."/>
            <person name="Klonowska A."/>
            <person name="Caroline B."/>
            <person name="Booth K."/>
            <person name="Vriezen J.A."/>
            <person name="Melkonian R."/>
            <person name="James E.K."/>
            <person name="Young J.P."/>
            <person name="Bena G."/>
            <person name="Hauser L."/>
            <person name="Land M."/>
            <person name="Kyrpides N."/>
            <person name="Bruce D."/>
            <person name="Chain P."/>
            <person name="Copeland A."/>
            <person name="Pitluck S."/>
            <person name="Woyke T."/>
            <person name="Lizotte-Waniewski M."/>
            <person name="Bristow J."/>
            <person name="Riley M."/>
        </authorList>
    </citation>
    <scope>NUCLEOTIDE SEQUENCE [LARGE SCALE GENOMIC DNA]</scope>
    <source>
        <strain>DSM 17167 / CIP 108236 / LMG 21445 / STM815</strain>
    </source>
</reference>
<gene>
    <name evidence="1" type="primary">cbbL</name>
    <name type="ordered locus">Bphy_6497</name>
</gene>
<geneLocation type="plasmid">
    <name>pBPHY01</name>
</geneLocation>
<proteinExistence type="inferred from homology"/>
<feature type="chain" id="PRO_0000355748" description="Ribulose bisphosphate carboxylase large chain">
    <location>
        <begin position="1"/>
        <end position="501"/>
    </location>
</feature>
<feature type="active site" description="Proton acceptor" evidence="1">
    <location>
        <position position="193"/>
    </location>
</feature>
<feature type="active site" description="Proton acceptor" evidence="1">
    <location>
        <position position="311"/>
    </location>
</feature>
<feature type="binding site" description="in homodimeric partner" evidence="1">
    <location>
        <position position="141"/>
    </location>
    <ligand>
        <name>substrate</name>
    </ligand>
</feature>
<feature type="binding site" evidence="1">
    <location>
        <position position="191"/>
    </location>
    <ligand>
        <name>substrate</name>
    </ligand>
</feature>
<feature type="binding site" evidence="1">
    <location>
        <position position="195"/>
    </location>
    <ligand>
        <name>substrate</name>
    </ligand>
</feature>
<feature type="binding site" description="via carbamate group" evidence="1">
    <location>
        <position position="219"/>
    </location>
    <ligand>
        <name>Mg(2+)</name>
        <dbReference type="ChEBI" id="CHEBI:18420"/>
    </ligand>
</feature>
<feature type="binding site" evidence="1">
    <location>
        <position position="221"/>
    </location>
    <ligand>
        <name>Mg(2+)</name>
        <dbReference type="ChEBI" id="CHEBI:18420"/>
    </ligand>
</feature>
<feature type="binding site" evidence="1">
    <location>
        <position position="222"/>
    </location>
    <ligand>
        <name>Mg(2+)</name>
        <dbReference type="ChEBI" id="CHEBI:18420"/>
    </ligand>
</feature>
<feature type="binding site" evidence="1">
    <location>
        <position position="312"/>
    </location>
    <ligand>
        <name>substrate</name>
    </ligand>
</feature>
<feature type="binding site" evidence="1">
    <location>
        <position position="344"/>
    </location>
    <ligand>
        <name>substrate</name>
    </ligand>
</feature>
<feature type="binding site" evidence="1">
    <location>
        <position position="396"/>
    </location>
    <ligand>
        <name>substrate</name>
    </ligand>
</feature>
<feature type="site" description="Transition state stabilizer" evidence="1">
    <location>
        <position position="351"/>
    </location>
</feature>
<feature type="modified residue" description="N6-carboxylysine" evidence="1">
    <location>
        <position position="219"/>
    </location>
</feature>
<comment type="function">
    <text evidence="1">RuBisCO catalyzes two reactions: the carboxylation of D-ribulose 1,5-bisphosphate, the primary event in carbon dioxide fixation, as well as the oxidative fragmentation of the pentose substrate. Both reactions occur simultaneously and in competition at the same active site.</text>
</comment>
<comment type="catalytic activity">
    <reaction evidence="1">
        <text>2 (2R)-3-phosphoglycerate + 2 H(+) = D-ribulose 1,5-bisphosphate + CO2 + H2O</text>
        <dbReference type="Rhea" id="RHEA:23124"/>
        <dbReference type="ChEBI" id="CHEBI:15377"/>
        <dbReference type="ChEBI" id="CHEBI:15378"/>
        <dbReference type="ChEBI" id="CHEBI:16526"/>
        <dbReference type="ChEBI" id="CHEBI:57870"/>
        <dbReference type="ChEBI" id="CHEBI:58272"/>
        <dbReference type="EC" id="4.1.1.39"/>
    </reaction>
</comment>
<comment type="catalytic activity">
    <reaction evidence="1">
        <text>D-ribulose 1,5-bisphosphate + O2 = 2-phosphoglycolate + (2R)-3-phosphoglycerate + 2 H(+)</text>
        <dbReference type="Rhea" id="RHEA:36631"/>
        <dbReference type="ChEBI" id="CHEBI:15378"/>
        <dbReference type="ChEBI" id="CHEBI:15379"/>
        <dbReference type="ChEBI" id="CHEBI:57870"/>
        <dbReference type="ChEBI" id="CHEBI:58033"/>
        <dbReference type="ChEBI" id="CHEBI:58272"/>
    </reaction>
</comment>
<comment type="cofactor">
    <cofactor evidence="1">
        <name>Mg(2+)</name>
        <dbReference type="ChEBI" id="CHEBI:18420"/>
    </cofactor>
    <text evidence="1">Binds 1 Mg(2+) ion per subunit.</text>
</comment>
<comment type="subunit">
    <text evidence="1">Heterohexadecamer of 8 large chains and 8 small chains.</text>
</comment>
<comment type="miscellaneous">
    <text evidence="1">The basic functional RuBisCO is composed of a large chain homodimer in a 'head-to-tail' conformation. In form I RuBisCO this homodimer is arranged in a barrel-like tetramer with the small subunits forming a tetrameric 'cap' on each end of the 'barrel'.</text>
</comment>
<comment type="similarity">
    <text evidence="1">Belongs to the RuBisCO large chain family. Type I subfamily.</text>
</comment>
<dbReference type="EC" id="4.1.1.39" evidence="1"/>
<dbReference type="EMBL" id="CP001045">
    <property type="protein sequence ID" value="ACC75527.1"/>
    <property type="molecule type" value="Genomic_DNA"/>
</dbReference>
<dbReference type="RefSeq" id="WP_012405686.1">
    <property type="nucleotide sequence ID" value="NC_010625.1"/>
</dbReference>
<dbReference type="SMR" id="B2JX50"/>
<dbReference type="KEGG" id="bph:Bphy_6497"/>
<dbReference type="HOGENOM" id="CLU_031450_2_0_4"/>
<dbReference type="OrthoDB" id="9770811at2"/>
<dbReference type="Proteomes" id="UP000001192">
    <property type="component" value="Plasmid pBPHY01"/>
</dbReference>
<dbReference type="GO" id="GO:0000287">
    <property type="term" value="F:magnesium ion binding"/>
    <property type="evidence" value="ECO:0007669"/>
    <property type="project" value="UniProtKB-UniRule"/>
</dbReference>
<dbReference type="GO" id="GO:0004497">
    <property type="term" value="F:monooxygenase activity"/>
    <property type="evidence" value="ECO:0007669"/>
    <property type="project" value="UniProtKB-KW"/>
</dbReference>
<dbReference type="GO" id="GO:0016984">
    <property type="term" value="F:ribulose-bisphosphate carboxylase activity"/>
    <property type="evidence" value="ECO:0007669"/>
    <property type="project" value="UniProtKB-UniRule"/>
</dbReference>
<dbReference type="GO" id="GO:0019253">
    <property type="term" value="P:reductive pentose-phosphate cycle"/>
    <property type="evidence" value="ECO:0007669"/>
    <property type="project" value="UniProtKB-UniRule"/>
</dbReference>
<dbReference type="CDD" id="cd08212">
    <property type="entry name" value="RuBisCO_large_I"/>
    <property type="match status" value="1"/>
</dbReference>
<dbReference type="Gene3D" id="3.20.20.110">
    <property type="entry name" value="Ribulose bisphosphate carboxylase, large subunit, C-terminal domain"/>
    <property type="match status" value="1"/>
</dbReference>
<dbReference type="Gene3D" id="3.30.70.150">
    <property type="entry name" value="RuBisCO large subunit, N-terminal domain"/>
    <property type="match status" value="1"/>
</dbReference>
<dbReference type="HAMAP" id="MF_01338">
    <property type="entry name" value="RuBisCO_L_type1"/>
    <property type="match status" value="1"/>
</dbReference>
<dbReference type="InterPro" id="IPR033966">
    <property type="entry name" value="RuBisCO"/>
</dbReference>
<dbReference type="InterPro" id="IPR020878">
    <property type="entry name" value="RuBisCo_large_chain_AS"/>
</dbReference>
<dbReference type="InterPro" id="IPR000685">
    <property type="entry name" value="RuBisCO_lsu_C"/>
</dbReference>
<dbReference type="InterPro" id="IPR036376">
    <property type="entry name" value="RuBisCO_lsu_C_sf"/>
</dbReference>
<dbReference type="InterPro" id="IPR017443">
    <property type="entry name" value="RuBisCO_lsu_fd_N"/>
</dbReference>
<dbReference type="InterPro" id="IPR036422">
    <property type="entry name" value="RuBisCO_lsu_N_sf"/>
</dbReference>
<dbReference type="InterPro" id="IPR020888">
    <property type="entry name" value="RuBisCO_lsuI"/>
</dbReference>
<dbReference type="NCBIfam" id="NF003252">
    <property type="entry name" value="PRK04208.1"/>
    <property type="match status" value="1"/>
</dbReference>
<dbReference type="PANTHER" id="PTHR42704">
    <property type="entry name" value="RIBULOSE BISPHOSPHATE CARBOXYLASE"/>
    <property type="match status" value="1"/>
</dbReference>
<dbReference type="PANTHER" id="PTHR42704:SF17">
    <property type="entry name" value="RIBULOSE BISPHOSPHATE CARBOXYLASE LARGE CHAIN"/>
    <property type="match status" value="1"/>
</dbReference>
<dbReference type="Pfam" id="PF00016">
    <property type="entry name" value="RuBisCO_large"/>
    <property type="match status" value="1"/>
</dbReference>
<dbReference type="Pfam" id="PF02788">
    <property type="entry name" value="RuBisCO_large_N"/>
    <property type="match status" value="1"/>
</dbReference>
<dbReference type="SFLD" id="SFLDG01052">
    <property type="entry name" value="RuBisCO"/>
    <property type="match status" value="1"/>
</dbReference>
<dbReference type="SFLD" id="SFLDS00014">
    <property type="entry name" value="RuBisCO"/>
    <property type="match status" value="1"/>
</dbReference>
<dbReference type="SFLD" id="SFLDG00301">
    <property type="entry name" value="RuBisCO-like_proteins"/>
    <property type="match status" value="1"/>
</dbReference>
<dbReference type="SUPFAM" id="SSF51649">
    <property type="entry name" value="RuBisCo, C-terminal domain"/>
    <property type="match status" value="1"/>
</dbReference>
<dbReference type="SUPFAM" id="SSF54966">
    <property type="entry name" value="RuBisCO, large subunit, small (N-terminal) domain"/>
    <property type="match status" value="1"/>
</dbReference>
<dbReference type="PROSITE" id="PS00157">
    <property type="entry name" value="RUBISCO_LARGE"/>
    <property type="match status" value="1"/>
</dbReference>
<accession>B2JX50</accession>
<organism>
    <name type="scientific">Paraburkholderia phymatum (strain DSM 17167 / CIP 108236 / LMG 21445 / STM815)</name>
    <name type="common">Burkholderia phymatum</name>
    <dbReference type="NCBI Taxonomy" id="391038"/>
    <lineage>
        <taxon>Bacteria</taxon>
        <taxon>Pseudomonadati</taxon>
        <taxon>Pseudomonadota</taxon>
        <taxon>Betaproteobacteria</taxon>
        <taxon>Burkholderiales</taxon>
        <taxon>Burkholderiaceae</taxon>
        <taxon>Paraburkholderia</taxon>
    </lineage>
</organism>
<protein>
    <recommendedName>
        <fullName evidence="1">Ribulose bisphosphate carboxylase large chain</fullName>
        <shortName evidence="1">RuBisCO large subunit</shortName>
        <ecNumber evidence="1">4.1.1.39</ecNumber>
    </recommendedName>
</protein>
<keyword id="KW-0113">Calvin cycle</keyword>
<keyword id="KW-0120">Carbon dioxide fixation</keyword>
<keyword id="KW-0456">Lyase</keyword>
<keyword id="KW-0460">Magnesium</keyword>
<keyword id="KW-0479">Metal-binding</keyword>
<keyword id="KW-0503">Monooxygenase</keyword>
<keyword id="KW-0560">Oxidoreductase</keyword>
<keyword id="KW-0614">Plasmid</keyword>
<keyword id="KW-1185">Reference proteome</keyword>
<evidence type="ECO:0000255" key="1">
    <source>
        <dbReference type="HAMAP-Rule" id="MF_01338"/>
    </source>
</evidence>
<sequence>MNDFSKEAVKPADSATAAAKAEKRSRYAAGVMKYREMGYWQPDYTPKDTDVIALFRITPQPGVEPEEAAAAVAGESSTATWTVVWTDRLTACDMYRAKAFRVEPVPNPAEGEPQYFAFIAYELDLFEEGSVANLTASIIGNVFGFKPLKALRLEDMRIPVAYLKTFQGPPTGIVVERERLDKYGRPLLGATVKPKLGLSGKNYGRVVYEGLKGGLDFLKDDENINSQPFMHWRDRYLFAMEAVHRAQAETGEVKGHYLNVTAGTMEDMYERAEFAKELGSCIVMIDLVIGWTAITSMGRWARKNDMILHLHRAGHGTYTRQRNHGISFRVIAKWLRMAGVDHAHAGTAVGKLDGDPLSVQGYYNVLRESHNSVDLTRGIFFDQHWAGLRKVMPVASGGIHAGQMHQLLDLFGDDAILQFGGGTIGHPSGIQAGATANRVALETMVKARNEGRDIANEGSDLLEAAARHCTPLKQALDTWGDVTFNYTPTDSPDFAVTPSVA</sequence>
<name>RBL_PARP8</name>